<proteinExistence type="evidence at protein level"/>
<accession>P43131</accession>
<feature type="signal peptide" evidence="2">
    <location>
        <begin position="1"/>
        <end position="24"/>
    </location>
</feature>
<feature type="chain" id="PRO_0000022398" description="Serine protease inhibitor">
    <location>
        <begin position="25"/>
        <end position="326"/>
    </location>
</feature>
<feature type="chain" id="PRO_0000022399" description="Serine protease inhibitor C">
    <location>
        <begin position="104"/>
        <end position="326"/>
    </location>
</feature>
<feature type="chain" id="PRO_0000022400" description="Serine protease inhibitor B" evidence="1">
    <location>
        <begin position="104"/>
        <end status="unknown"/>
    </location>
</feature>
<feature type="chain" id="PRO_0000022401" description="Serine protease inhibitor A">
    <location>
        <begin position="122"/>
        <end position="326"/>
    </location>
</feature>
<feature type="repeat" description="1">
    <location>
        <begin position="177"/>
        <end position="208"/>
    </location>
</feature>
<feature type="repeat" description="2">
    <location>
        <begin position="272"/>
        <end position="304"/>
    </location>
</feature>
<feature type="region of interest" description="2 X 32 AA approximate repeats">
    <location>
        <begin position="177"/>
        <end position="304"/>
    </location>
</feature>
<organism>
    <name type="scientific">Brevibacillus choshinensis</name>
    <dbReference type="NCBI Taxonomy" id="54911"/>
    <lineage>
        <taxon>Bacteria</taxon>
        <taxon>Bacillati</taxon>
        <taxon>Bacillota</taxon>
        <taxon>Bacilli</taxon>
        <taxon>Bacillales</taxon>
        <taxon>Paenibacillaceae</taxon>
        <taxon>Brevibacillus</taxon>
    </lineage>
</organism>
<comment type="function">
    <text>Shows inhibitory activity towards serine proteases, such as trypsin, chymotrypsin and subtilisin. May form a trypsin-inhibitor complex in a molar ratio of 1:1.</text>
</comment>
<comment type="biophysicochemical properties">
    <temperatureDependence>
        <text>Thermostable at neutral and acidic pHs.</text>
    </temperatureDependence>
</comment>
<comment type="subcellular location">
    <subcellularLocation>
        <location>Secreted</location>
    </subcellularLocation>
</comment>
<comment type="PTM">
    <text>Proteolytically cleaved to yield at least three forms (BBRPI-A, -B, and -C).</text>
</comment>
<protein>
    <recommendedName>
        <fullName>Protease inhibitor</fullName>
    </recommendedName>
    <alternativeName>
        <fullName>BBRPI</fullName>
    </alternativeName>
    <component>
        <recommendedName>
            <fullName>Serine protease inhibitor</fullName>
        </recommendedName>
    </component>
    <component>
        <recommendedName>
            <fullName>Serine protease inhibitor C</fullName>
        </recommendedName>
    </component>
    <component>
        <recommendedName>
            <fullName>Serine protease inhibitor B</fullName>
        </recommendedName>
    </component>
    <component>
        <recommendedName>
            <fullName>Serine protease inhibitor A</fullName>
        </recommendedName>
    </component>
</protein>
<name>SPI_BRECH</name>
<dbReference type="EMBL" id="D10696">
    <property type="protein sequence ID" value="BAA01538.1"/>
    <property type="molecule type" value="Genomic_DNA"/>
</dbReference>
<dbReference type="SMR" id="P43131"/>
<dbReference type="STRING" id="54911.AN963_29200"/>
<dbReference type="GO" id="GO:0005576">
    <property type="term" value="C:extracellular region"/>
    <property type="evidence" value="ECO:0007669"/>
    <property type="project" value="UniProtKB-SubCell"/>
</dbReference>
<dbReference type="GO" id="GO:0004867">
    <property type="term" value="F:serine-type endopeptidase inhibitor activity"/>
    <property type="evidence" value="ECO:0007669"/>
    <property type="project" value="UniProtKB-KW"/>
</dbReference>
<dbReference type="Gene3D" id="3.30.457.10">
    <property type="entry name" value="Copper amine oxidase-like, N-terminal domain"/>
    <property type="match status" value="1"/>
</dbReference>
<dbReference type="InterPro" id="IPR012854">
    <property type="entry name" value="Cu_amine_oxidase-like_N"/>
</dbReference>
<dbReference type="InterPro" id="IPR036582">
    <property type="entry name" value="Mao_N_sf"/>
</dbReference>
<dbReference type="Pfam" id="PF07833">
    <property type="entry name" value="Cu_amine_oxidN1"/>
    <property type="match status" value="1"/>
</dbReference>
<dbReference type="SUPFAM" id="SSF55383">
    <property type="entry name" value="Copper amine oxidase, domain N"/>
    <property type="match status" value="1"/>
</dbReference>
<keyword id="KW-0903">Direct protein sequencing</keyword>
<keyword id="KW-0646">Protease inhibitor</keyword>
<keyword id="KW-0677">Repeat</keyword>
<keyword id="KW-0964">Secreted</keyword>
<keyword id="KW-0722">Serine protease inhibitor</keyword>
<keyword id="KW-0732">Signal</keyword>
<sequence>MKTIRTGMMTLAALAVLGTNVVSATSEPVKELSVNVNGQHIEQAAIFDKGQQTVLVPLRDVAESLGFQVKWNAETKAAEVNKGAIFSYAKVGEDRYPFAKMYKTLGAEPRLLNGNTYVPVAFVDEILQAEVNVTDDAVTVVDEESDVAPVRTGTITTLNKREDGGVSFQLNGYETGIILHVDKETKITTADGKELKPEDLQLGMEVEATHQKFMAMSMPQSGAVSIVVKSGLETPEVLGTAGKVASIDKDQEGSYKMLVEGQALAENAPEKVALIVGKDTKIVSAKDNKELAPEDLKAEMKVFAYYGPKLTRSLPPIGVAEKIVVE</sequence>
<evidence type="ECO:0000255" key="1"/>
<evidence type="ECO:0000269" key="2">
    <source>
    </source>
</evidence>
<reference key="1">
    <citation type="journal article" date="1992" name="Appl. Environ. Microbiol.">
        <title>Characterization of an extracellular protease inhibitor of Bacillus brevis HPD31 and nucleotide sequence of the corresponding gene.</title>
        <authorList>
            <person name="Shiga Y."/>
            <person name="Hasegawa K."/>
            <person name="Tsuboi A."/>
            <person name="Yamagata H."/>
            <person name="Udaka S."/>
        </authorList>
    </citation>
    <scope>NUCLEOTIDE SEQUENCE [GENOMIC DNA]</scope>
    <scope>PROTEIN SEQUENCE OF 25-32; 104-112 AND 122-136</scope>
    <source>
        <strain>HPD31</strain>
    </source>
</reference>